<proteinExistence type="evidence at transcript level"/>
<comment type="function">
    <text>Phototransformation of protochlorophyllide (Pchlide) to chlorophyllide (Chlide).</text>
</comment>
<comment type="catalytic activity">
    <reaction>
        <text>chlorophyllide a + NADP(+) = protochlorophyllide a + NADPH + H(+)</text>
        <dbReference type="Rhea" id="RHEA:11132"/>
        <dbReference type="ChEBI" id="CHEBI:15378"/>
        <dbReference type="ChEBI" id="CHEBI:57783"/>
        <dbReference type="ChEBI" id="CHEBI:58349"/>
        <dbReference type="ChEBI" id="CHEBI:83348"/>
        <dbReference type="ChEBI" id="CHEBI:83350"/>
        <dbReference type="EC" id="1.3.1.33"/>
    </reaction>
</comment>
<comment type="pathway">
    <text>Porphyrin-containing compound metabolism; chlorophyll biosynthesis.</text>
</comment>
<comment type="subcellular location">
    <subcellularLocation>
        <location evidence="1">Plastid</location>
        <location evidence="1">Chloroplast</location>
    </subcellularLocation>
</comment>
<comment type="similarity">
    <text evidence="3">Belongs to the short-chain dehydrogenases/reductases (SDR) family. POR subfamily.</text>
</comment>
<protein>
    <recommendedName>
        <fullName>Protochlorophyllide reductase A, chloroplastic</fullName>
        <shortName>PCR A</shortName>
        <ecNumber>1.3.1.33</ecNumber>
    </recommendedName>
    <alternativeName>
        <fullName>NADPH-protochlorophyllide oxidoreductase A</fullName>
        <shortName>POR A</shortName>
    </alternativeName>
</protein>
<reference key="1">
    <citation type="journal article" date="2002" name="Nature">
        <title>Sequence and analysis of rice chromosome 4.</title>
        <authorList>
            <person name="Feng Q."/>
            <person name="Zhang Y."/>
            <person name="Hao P."/>
            <person name="Wang S."/>
            <person name="Fu G."/>
            <person name="Huang Y."/>
            <person name="Li Y."/>
            <person name="Zhu J."/>
            <person name="Liu Y."/>
            <person name="Hu X."/>
            <person name="Jia P."/>
            <person name="Zhang Y."/>
            <person name="Zhao Q."/>
            <person name="Ying K."/>
            <person name="Yu S."/>
            <person name="Tang Y."/>
            <person name="Weng Q."/>
            <person name="Zhang L."/>
            <person name="Lu Y."/>
            <person name="Mu J."/>
            <person name="Lu Y."/>
            <person name="Zhang L.S."/>
            <person name="Yu Z."/>
            <person name="Fan D."/>
            <person name="Liu X."/>
            <person name="Lu T."/>
            <person name="Li C."/>
            <person name="Wu Y."/>
            <person name="Sun T."/>
            <person name="Lei H."/>
            <person name="Li T."/>
            <person name="Hu H."/>
            <person name="Guan J."/>
            <person name="Wu M."/>
            <person name="Zhang R."/>
            <person name="Zhou B."/>
            <person name="Chen Z."/>
            <person name="Chen L."/>
            <person name="Jin Z."/>
            <person name="Wang R."/>
            <person name="Yin H."/>
            <person name="Cai Z."/>
            <person name="Ren S."/>
            <person name="Lv G."/>
            <person name="Gu W."/>
            <person name="Zhu G."/>
            <person name="Tu Y."/>
            <person name="Jia J."/>
            <person name="Zhang Y."/>
            <person name="Chen J."/>
            <person name="Kang H."/>
            <person name="Chen X."/>
            <person name="Shao C."/>
            <person name="Sun Y."/>
            <person name="Hu Q."/>
            <person name="Zhang X."/>
            <person name="Zhang W."/>
            <person name="Wang L."/>
            <person name="Ding C."/>
            <person name="Sheng H."/>
            <person name="Gu J."/>
            <person name="Chen S."/>
            <person name="Ni L."/>
            <person name="Zhu F."/>
            <person name="Chen W."/>
            <person name="Lan L."/>
            <person name="Lai Y."/>
            <person name="Cheng Z."/>
            <person name="Gu M."/>
            <person name="Jiang J."/>
            <person name="Li J."/>
            <person name="Hong G."/>
            <person name="Xue Y."/>
            <person name="Han B."/>
        </authorList>
    </citation>
    <scope>NUCLEOTIDE SEQUENCE [LARGE SCALE GENOMIC DNA]</scope>
    <source>
        <strain>cv. Nipponbare</strain>
    </source>
</reference>
<reference key="2">
    <citation type="journal article" date="2005" name="Nature">
        <title>The map-based sequence of the rice genome.</title>
        <authorList>
            <consortium name="International rice genome sequencing project (IRGSP)"/>
        </authorList>
    </citation>
    <scope>NUCLEOTIDE SEQUENCE [LARGE SCALE GENOMIC DNA]</scope>
    <source>
        <strain>cv. Nipponbare</strain>
    </source>
</reference>
<reference key="3">
    <citation type="journal article" date="2008" name="Nucleic Acids Res.">
        <title>The rice annotation project database (RAP-DB): 2008 update.</title>
        <authorList>
            <consortium name="The rice annotation project (RAP)"/>
        </authorList>
    </citation>
    <scope>GENOME REANNOTATION</scope>
    <source>
        <strain>cv. Nipponbare</strain>
    </source>
</reference>
<reference key="4">
    <citation type="journal article" date="2013" name="Rice">
        <title>Improvement of the Oryza sativa Nipponbare reference genome using next generation sequence and optical map data.</title>
        <authorList>
            <person name="Kawahara Y."/>
            <person name="de la Bastide M."/>
            <person name="Hamilton J.P."/>
            <person name="Kanamori H."/>
            <person name="McCombie W.R."/>
            <person name="Ouyang S."/>
            <person name="Schwartz D.C."/>
            <person name="Tanaka T."/>
            <person name="Wu J."/>
            <person name="Zhou S."/>
            <person name="Childs K.L."/>
            <person name="Davidson R.M."/>
            <person name="Lin H."/>
            <person name="Quesada-Ocampo L."/>
            <person name="Vaillancourt B."/>
            <person name="Sakai H."/>
            <person name="Lee S.S."/>
            <person name="Kim J."/>
            <person name="Numa H."/>
            <person name="Itoh T."/>
            <person name="Buell C.R."/>
            <person name="Matsumoto T."/>
        </authorList>
    </citation>
    <scope>GENOME REANNOTATION</scope>
    <source>
        <strain>cv. Nipponbare</strain>
    </source>
</reference>
<reference key="5">
    <citation type="journal article" date="2005" name="PLoS Biol.">
        <title>The genomes of Oryza sativa: a history of duplications.</title>
        <authorList>
            <person name="Yu J."/>
            <person name="Wang J."/>
            <person name="Lin W."/>
            <person name="Li S."/>
            <person name="Li H."/>
            <person name="Zhou J."/>
            <person name="Ni P."/>
            <person name="Dong W."/>
            <person name="Hu S."/>
            <person name="Zeng C."/>
            <person name="Zhang J."/>
            <person name="Zhang Y."/>
            <person name="Li R."/>
            <person name="Xu Z."/>
            <person name="Li S."/>
            <person name="Li X."/>
            <person name="Zheng H."/>
            <person name="Cong L."/>
            <person name="Lin L."/>
            <person name="Yin J."/>
            <person name="Geng J."/>
            <person name="Li G."/>
            <person name="Shi J."/>
            <person name="Liu J."/>
            <person name="Lv H."/>
            <person name="Li J."/>
            <person name="Wang J."/>
            <person name="Deng Y."/>
            <person name="Ran L."/>
            <person name="Shi X."/>
            <person name="Wang X."/>
            <person name="Wu Q."/>
            <person name="Li C."/>
            <person name="Ren X."/>
            <person name="Wang J."/>
            <person name="Wang X."/>
            <person name="Li D."/>
            <person name="Liu D."/>
            <person name="Zhang X."/>
            <person name="Ji Z."/>
            <person name="Zhao W."/>
            <person name="Sun Y."/>
            <person name="Zhang Z."/>
            <person name="Bao J."/>
            <person name="Han Y."/>
            <person name="Dong L."/>
            <person name="Ji J."/>
            <person name="Chen P."/>
            <person name="Wu S."/>
            <person name="Liu J."/>
            <person name="Xiao Y."/>
            <person name="Bu D."/>
            <person name="Tan J."/>
            <person name="Yang L."/>
            <person name="Ye C."/>
            <person name="Zhang J."/>
            <person name="Xu J."/>
            <person name="Zhou Y."/>
            <person name="Yu Y."/>
            <person name="Zhang B."/>
            <person name="Zhuang S."/>
            <person name="Wei H."/>
            <person name="Liu B."/>
            <person name="Lei M."/>
            <person name="Yu H."/>
            <person name="Li Y."/>
            <person name="Xu H."/>
            <person name="Wei S."/>
            <person name="He X."/>
            <person name="Fang L."/>
            <person name="Zhang Z."/>
            <person name="Zhang Y."/>
            <person name="Huang X."/>
            <person name="Su Z."/>
            <person name="Tong W."/>
            <person name="Li J."/>
            <person name="Tong Z."/>
            <person name="Li S."/>
            <person name="Ye J."/>
            <person name="Wang L."/>
            <person name="Fang L."/>
            <person name="Lei T."/>
            <person name="Chen C.-S."/>
            <person name="Chen H.-C."/>
            <person name="Xu Z."/>
            <person name="Li H."/>
            <person name="Huang H."/>
            <person name="Zhang F."/>
            <person name="Xu H."/>
            <person name="Li N."/>
            <person name="Zhao C."/>
            <person name="Li S."/>
            <person name="Dong L."/>
            <person name="Huang Y."/>
            <person name="Li L."/>
            <person name="Xi Y."/>
            <person name="Qi Q."/>
            <person name="Li W."/>
            <person name="Zhang B."/>
            <person name="Hu W."/>
            <person name="Zhang Y."/>
            <person name="Tian X."/>
            <person name="Jiao Y."/>
            <person name="Liang X."/>
            <person name="Jin J."/>
            <person name="Gao L."/>
            <person name="Zheng W."/>
            <person name="Hao B."/>
            <person name="Liu S.-M."/>
            <person name="Wang W."/>
            <person name="Yuan L."/>
            <person name="Cao M."/>
            <person name="McDermott J."/>
            <person name="Samudrala R."/>
            <person name="Wang J."/>
            <person name="Wong G.K.-S."/>
            <person name="Yang H."/>
        </authorList>
    </citation>
    <scope>NUCLEOTIDE SEQUENCE [LARGE SCALE GENOMIC DNA]</scope>
    <source>
        <strain>cv. Nipponbare</strain>
    </source>
</reference>
<reference key="6">
    <citation type="journal article" date="2003" name="Science">
        <title>Collection, mapping, and annotation of over 28,000 cDNA clones from japonica rice.</title>
        <authorList>
            <consortium name="The rice full-length cDNA consortium"/>
        </authorList>
    </citation>
    <scope>NUCLEOTIDE SEQUENCE [LARGE SCALE MRNA]</scope>
    <source>
        <strain>cv. Nipponbare</strain>
    </source>
</reference>
<accession>Q7XKF3</accession>
<accession>A0A0P0WGD3</accession>
<organism>
    <name type="scientific">Oryza sativa subsp. japonica</name>
    <name type="common">Rice</name>
    <dbReference type="NCBI Taxonomy" id="39947"/>
    <lineage>
        <taxon>Eukaryota</taxon>
        <taxon>Viridiplantae</taxon>
        <taxon>Streptophyta</taxon>
        <taxon>Embryophyta</taxon>
        <taxon>Tracheophyta</taxon>
        <taxon>Spermatophyta</taxon>
        <taxon>Magnoliopsida</taxon>
        <taxon>Liliopsida</taxon>
        <taxon>Poales</taxon>
        <taxon>Poaceae</taxon>
        <taxon>BOP clade</taxon>
        <taxon>Oryzoideae</taxon>
        <taxon>Oryzeae</taxon>
        <taxon>Oryzinae</taxon>
        <taxon>Oryza</taxon>
        <taxon>Oryza sativa</taxon>
    </lineage>
</organism>
<evidence type="ECO:0000250" key="1"/>
<evidence type="ECO:0000255" key="2"/>
<evidence type="ECO:0000305" key="3"/>
<keyword id="KW-0149">Chlorophyll biosynthesis</keyword>
<keyword id="KW-0150">Chloroplast</keyword>
<keyword id="KW-0521">NADP</keyword>
<keyword id="KW-0560">Oxidoreductase</keyword>
<keyword id="KW-0602">Photosynthesis</keyword>
<keyword id="KW-0934">Plastid</keyword>
<keyword id="KW-1185">Reference proteome</keyword>
<keyword id="KW-0809">Transit peptide</keyword>
<feature type="transit peptide" description="Chloroplast" evidence="2">
    <location>
        <begin position="1"/>
        <end position="35"/>
    </location>
</feature>
<feature type="chain" id="PRO_0000376076" description="Protochlorophyllide reductase A, chloroplastic">
    <location>
        <begin position="36"/>
        <end position="387"/>
    </location>
</feature>
<dbReference type="EC" id="1.3.1.33"/>
<dbReference type="EMBL" id="AL606456">
    <property type="protein sequence ID" value="CAE05721.1"/>
    <property type="molecule type" value="Genomic_DNA"/>
</dbReference>
<dbReference type="EMBL" id="AP008210">
    <property type="protein sequence ID" value="BAF16188.1"/>
    <property type="molecule type" value="Genomic_DNA"/>
</dbReference>
<dbReference type="EMBL" id="AP014960">
    <property type="protein sequence ID" value="BAS91648.1"/>
    <property type="molecule type" value="Genomic_DNA"/>
</dbReference>
<dbReference type="EMBL" id="CM000141">
    <property type="protein sequence ID" value="EAZ32424.1"/>
    <property type="molecule type" value="Genomic_DNA"/>
</dbReference>
<dbReference type="EMBL" id="AK065236">
    <property type="protein sequence ID" value="BAG89429.1"/>
    <property type="molecule type" value="mRNA"/>
</dbReference>
<dbReference type="EMBL" id="AK103940">
    <property type="protein sequence ID" value="BAG96333.1"/>
    <property type="molecule type" value="mRNA"/>
</dbReference>
<dbReference type="EMBL" id="AK104855">
    <property type="protein sequence ID" value="BAG96996.1"/>
    <property type="molecule type" value="mRNA"/>
</dbReference>
<dbReference type="RefSeq" id="XP_015633866.1">
    <property type="nucleotide sequence ID" value="XM_015778380.1"/>
</dbReference>
<dbReference type="SMR" id="Q7XKF3"/>
<dbReference type="FunCoup" id="Q7XKF3">
    <property type="interactions" value="4"/>
</dbReference>
<dbReference type="STRING" id="39947.Q7XKF3"/>
<dbReference type="PaxDb" id="39947-Q7XKF3"/>
<dbReference type="EnsemblPlants" id="Os04t0678700-01">
    <property type="protein sequence ID" value="Os04t0678700-01"/>
    <property type="gene ID" value="Os04g0678700"/>
</dbReference>
<dbReference type="Gramene" id="Os04t0678700-01">
    <property type="protein sequence ID" value="Os04t0678700-01"/>
    <property type="gene ID" value="Os04g0678700"/>
</dbReference>
<dbReference type="KEGG" id="dosa:Os04g0678700"/>
<dbReference type="eggNOG" id="KOG1208">
    <property type="taxonomic scope" value="Eukaryota"/>
</dbReference>
<dbReference type="HOGENOM" id="CLU_010194_44_3_1"/>
<dbReference type="InParanoid" id="Q7XKF3"/>
<dbReference type="OMA" id="GCIAETP"/>
<dbReference type="OrthoDB" id="191139at2759"/>
<dbReference type="BRENDA" id="1.3.1.33">
    <property type="organism ID" value="8948"/>
</dbReference>
<dbReference type="UniPathway" id="UPA00668"/>
<dbReference type="Proteomes" id="UP000000763">
    <property type="component" value="Chromosome 4"/>
</dbReference>
<dbReference type="Proteomes" id="UP000007752">
    <property type="component" value="Chromosome 4"/>
</dbReference>
<dbReference type="Proteomes" id="UP000059680">
    <property type="component" value="Chromosome 4"/>
</dbReference>
<dbReference type="GO" id="GO:0009507">
    <property type="term" value="C:chloroplast"/>
    <property type="evidence" value="ECO:0007669"/>
    <property type="project" value="UniProtKB-SubCell"/>
</dbReference>
<dbReference type="GO" id="GO:0016630">
    <property type="term" value="F:protochlorophyllide reductase activity"/>
    <property type="evidence" value="ECO:0007669"/>
    <property type="project" value="UniProtKB-EC"/>
</dbReference>
<dbReference type="GO" id="GO:0015995">
    <property type="term" value="P:chlorophyll biosynthetic process"/>
    <property type="evidence" value="ECO:0007669"/>
    <property type="project" value="UniProtKB-UniPathway"/>
</dbReference>
<dbReference type="GO" id="GO:0015979">
    <property type="term" value="P:photosynthesis"/>
    <property type="evidence" value="ECO:0007669"/>
    <property type="project" value="UniProtKB-KW"/>
</dbReference>
<dbReference type="CDD" id="cd09810">
    <property type="entry name" value="LPOR_like_SDR_c_like"/>
    <property type="match status" value="1"/>
</dbReference>
<dbReference type="Gene3D" id="3.40.50.720">
    <property type="entry name" value="NAD(P)-binding Rossmann-like Domain"/>
    <property type="match status" value="1"/>
</dbReference>
<dbReference type="InterPro" id="IPR036291">
    <property type="entry name" value="NAD(P)-bd_dom_sf"/>
</dbReference>
<dbReference type="InterPro" id="IPR005979">
    <property type="entry name" value="Prochl_reduct"/>
</dbReference>
<dbReference type="InterPro" id="IPR002347">
    <property type="entry name" value="SDR_fam"/>
</dbReference>
<dbReference type="NCBIfam" id="TIGR01289">
    <property type="entry name" value="LPOR"/>
    <property type="match status" value="1"/>
</dbReference>
<dbReference type="PANTHER" id="PTHR44419:SF6">
    <property type="entry name" value="PROTOCHLOROPHYLLIDE REDUCTASE A, CHLOROPLASTIC"/>
    <property type="match status" value="1"/>
</dbReference>
<dbReference type="PANTHER" id="PTHR44419">
    <property type="entry name" value="PROTOCHLOROPHYLLIDE REDUCTASE C, CHLOROPLASTIC"/>
    <property type="match status" value="1"/>
</dbReference>
<dbReference type="Pfam" id="PF00106">
    <property type="entry name" value="adh_short"/>
    <property type="match status" value="1"/>
</dbReference>
<dbReference type="PRINTS" id="PR00081">
    <property type="entry name" value="GDHRDH"/>
</dbReference>
<dbReference type="SUPFAM" id="SSF51735">
    <property type="entry name" value="NAD(P)-binding Rossmann-fold domains"/>
    <property type="match status" value="1"/>
</dbReference>
<gene>
    <name type="primary">PORA</name>
    <name type="ordered locus">Os04g0678700</name>
    <name type="ordered locus">LOC_Os04g58200</name>
    <name type="ORF">OsJ_16634</name>
    <name type="ORF">OSJNBb0017I01.1</name>
</gene>
<name>PORA_ORYSJ</name>
<sequence>MALQVQAALLPSALSVPKKGNLSAVVKEPGFLSVSQKAKKPSLVVRAVATPAAPVASPGAGTSKADGKKTLRQGVVVITGASSGLGLAAAKALAETGKWHVVMACRDFLKAATAAKAAGMAAGSYTVMHLDLASLDSVRQFVDNFRRSGMPLDALVCNAAIYRPTARQPTFTADGYEMSVGVNHLGHFLLARLMLDDLKKSDYPSRRLIILGSITGNTNTLAGNVPPKAGLGDLRGLAGGLRGQNGSAMIDGAESFDGAKAYKDSKICNMLTMQEFHRRFHEETGITFASLYPGCIATTGLFREHIPLFRLLFPPFQRFVTKGFVSEAESGKRLAQVVGDPSLTKSGVYWSWNKDSASFENQLSQEASDPEKARKLWDLSEKLVGLV</sequence>